<accession>Q873Y3</accession>
<accession>B9WA50</accession>
<proteinExistence type="inferred from homology"/>
<sequence length="666" mass="75299">MNYNIHPVTYLNADSSNTGTAETTTQHHHGSKKSPSSDIDVDNATSPSSFTSSQSPHINAMGNSPHSSFTSQSAANSPITDAKQHLVKTTTNEHKPAAFTPSVGQQPASQTNTTAPQSYTQPAQQLPTQLHPSLNQVYNNQPSYYLHQPAYGYQQQPLHQEYNQQPQQYHDHHGYYANNNNIPSINELNQKPPAPVKPFKKTYKKIRDEDLKGPFKCLWSNCNIIFETPEILYDHLCDDHVGRKSSNNLSLTCLWENCGTTTVKRDHITSHLRVHVPLKPFHCDLCTKSFKRPQDLKKHSKTHAEDHPKKLKKAQRELMKQQQKEAKQQQKLANKRANATTASDLQLNYYSGNPGDGLYDEASRKRRYENNSQHNMYVVNSILNDFNFQQMAQPPQQPGAVSTAVSSEFTTKRMKSGSEYNIDVFNKLNHLDDHLHHHHPQQNPQQYGGNIYEAEKFFNSLSNSIDMQYQNMSSQYQQQNPGVASFAQQKPAQQTNGQLYPSLPTIGNGSYTTSSSSSHKEGLVNNHNGYLPSYPQINRSLPYSGVAQQPPSALEFGGVSTYQKSAQSYEDSSESSDDDDDDEDDDDYSTSSEEELDALFDKLNIVDKNVEEVTIDGFNLKDVAKHRDMIHSVLVYLRKQIEQQEKEKSQEQKDDVNQLYPTITAF</sequence>
<evidence type="ECO:0000250" key="1"/>
<evidence type="ECO:0000255" key="2"/>
<evidence type="ECO:0000255" key="3">
    <source>
        <dbReference type="PROSITE-ProRule" id="PRU00042"/>
    </source>
</evidence>
<evidence type="ECO:0000256" key="4">
    <source>
        <dbReference type="SAM" id="MobiDB-lite"/>
    </source>
</evidence>
<evidence type="ECO:0000305" key="5"/>
<dbReference type="EMBL" id="AY211614">
    <property type="protein sequence ID" value="AAO61620.1"/>
    <property type="molecule type" value="Genomic_DNA"/>
</dbReference>
<dbReference type="EMBL" id="FM992688">
    <property type="protein sequence ID" value="CAX45688.1"/>
    <property type="molecule type" value="Genomic_DNA"/>
</dbReference>
<dbReference type="RefSeq" id="XP_002417970.1">
    <property type="nucleotide sequence ID" value="XM_002417925.1"/>
</dbReference>
<dbReference type="GeneID" id="8045521"/>
<dbReference type="KEGG" id="cdu:CD36_13310"/>
<dbReference type="CGD" id="CAL0000161840">
    <property type="gene designation" value="Cd36_13310"/>
</dbReference>
<dbReference type="VEuPathDB" id="FungiDB:CD36_13310"/>
<dbReference type="eggNOG" id="KOG1721">
    <property type="taxonomic scope" value="Eukaryota"/>
</dbReference>
<dbReference type="HOGENOM" id="CLU_028624_0_0_1"/>
<dbReference type="OrthoDB" id="6155966at2759"/>
<dbReference type="Proteomes" id="UP000002605">
    <property type="component" value="Chromosome 1"/>
</dbReference>
<dbReference type="GO" id="GO:0005737">
    <property type="term" value="C:cytoplasm"/>
    <property type="evidence" value="ECO:0007669"/>
    <property type="project" value="UniProtKB-SubCell"/>
</dbReference>
<dbReference type="GO" id="GO:0005634">
    <property type="term" value="C:nucleus"/>
    <property type="evidence" value="ECO:0007669"/>
    <property type="project" value="UniProtKB-SubCell"/>
</dbReference>
<dbReference type="GO" id="GO:0003677">
    <property type="term" value="F:DNA binding"/>
    <property type="evidence" value="ECO:0007669"/>
    <property type="project" value="UniProtKB-KW"/>
</dbReference>
<dbReference type="GO" id="GO:0008270">
    <property type="term" value="F:zinc ion binding"/>
    <property type="evidence" value="ECO:0007669"/>
    <property type="project" value="UniProtKB-KW"/>
</dbReference>
<dbReference type="GO" id="GO:0045944">
    <property type="term" value="P:positive regulation of transcription by RNA polymerase II"/>
    <property type="evidence" value="ECO:0007669"/>
    <property type="project" value="TreeGrafter"/>
</dbReference>
<dbReference type="FunFam" id="3.30.160.60:FF:000100">
    <property type="entry name" value="Zinc finger 45-like"/>
    <property type="match status" value="1"/>
</dbReference>
<dbReference type="Gene3D" id="3.30.160.60">
    <property type="entry name" value="Classic Zinc Finger"/>
    <property type="match status" value="2"/>
</dbReference>
<dbReference type="InterPro" id="IPR050806">
    <property type="entry name" value="pacC/RIM101"/>
</dbReference>
<dbReference type="InterPro" id="IPR036236">
    <property type="entry name" value="Znf_C2H2_sf"/>
</dbReference>
<dbReference type="InterPro" id="IPR013087">
    <property type="entry name" value="Znf_C2H2_type"/>
</dbReference>
<dbReference type="PANTHER" id="PTHR47257">
    <property type="entry name" value="PH-RESPONSE TRANSCRIPTION FACTOR PACC/RIM101"/>
    <property type="match status" value="1"/>
</dbReference>
<dbReference type="PANTHER" id="PTHR47257:SF1">
    <property type="entry name" value="PH-RESPONSE TRANSCRIPTION FACTOR PACC_RIM101"/>
    <property type="match status" value="1"/>
</dbReference>
<dbReference type="SMART" id="SM00355">
    <property type="entry name" value="ZnF_C2H2"/>
    <property type="match status" value="3"/>
</dbReference>
<dbReference type="SUPFAM" id="SSF57667">
    <property type="entry name" value="beta-beta-alpha zinc fingers"/>
    <property type="match status" value="2"/>
</dbReference>
<dbReference type="PROSITE" id="PS00028">
    <property type="entry name" value="ZINC_FINGER_C2H2_1"/>
    <property type="match status" value="2"/>
</dbReference>
<dbReference type="PROSITE" id="PS50157">
    <property type="entry name" value="ZINC_FINGER_C2H2_2"/>
    <property type="match status" value="3"/>
</dbReference>
<protein>
    <recommendedName>
        <fullName>pH-response transcription factor pacC/RIM101</fullName>
    </recommendedName>
</protein>
<comment type="function">
    <text evidence="1">Transcription factor that mediates regulation of both acid- and alkaline-expressed genes in response to ambient pH. At alkaline ambient pH, activates transcription of alkaline-expressed genes (including RIM101 itself) and represses transcription of acid-expressed genes (By similarity).</text>
</comment>
<comment type="subcellular location">
    <subcellularLocation>
        <location evidence="1">Cytoplasm</location>
    </subcellularLocation>
    <subcellularLocation>
        <location evidence="1">Nucleus</location>
    </subcellularLocation>
</comment>
<comment type="PTM">
    <text evidence="1">Activated by C-terminal proteolytic cleavage by signaling protease at neutral to alkaline ambient pH.</text>
</comment>
<comment type="similarity">
    <text evidence="5">Belongs to the pacC/RIM101 family.</text>
</comment>
<organism>
    <name type="scientific">Candida dubliniensis (strain CD36 / ATCC MYA-646 / CBS 7987 / NCPF 3949 / NRRL Y-17841)</name>
    <name type="common">Yeast</name>
    <dbReference type="NCBI Taxonomy" id="573826"/>
    <lineage>
        <taxon>Eukaryota</taxon>
        <taxon>Fungi</taxon>
        <taxon>Dikarya</taxon>
        <taxon>Ascomycota</taxon>
        <taxon>Saccharomycotina</taxon>
        <taxon>Pichiomycetes</taxon>
        <taxon>Debaryomycetaceae</taxon>
        <taxon>Candida/Lodderomyces clade</taxon>
        <taxon>Candida</taxon>
    </lineage>
</organism>
<gene>
    <name type="primary">RIM101</name>
    <name type="ORF">CD36_13310</name>
</gene>
<reference key="1">
    <citation type="submission" date="2003-01" db="EMBL/GenBank/DDBJ databases">
        <title>Molecular cloning of the Candida dubliniensis Rim101 gene.</title>
        <authorList>
            <person name="Eckert S.E."/>
            <person name="Wicker M."/>
            <person name="Muehlschlegel F.A."/>
        </authorList>
    </citation>
    <scope>NUCLEOTIDE SEQUENCE [GENOMIC DNA]</scope>
</reference>
<reference key="2">
    <citation type="journal article" date="2009" name="Genome Res.">
        <title>Comparative genomics of the fungal pathogens Candida dubliniensis and Candida albicans.</title>
        <authorList>
            <person name="Jackson A.P."/>
            <person name="Gamble J.A."/>
            <person name="Yeomans T."/>
            <person name="Moran G.P."/>
            <person name="Saunders D."/>
            <person name="Harris D."/>
            <person name="Aslett M."/>
            <person name="Barrell J.F."/>
            <person name="Butler G."/>
            <person name="Citiulo F."/>
            <person name="Coleman D.C."/>
            <person name="de Groot P.W.J."/>
            <person name="Goodwin T.J."/>
            <person name="Quail M.A."/>
            <person name="McQuillan J."/>
            <person name="Munro C.A."/>
            <person name="Pain A."/>
            <person name="Poulter R.T."/>
            <person name="Rajandream M.A."/>
            <person name="Renauld H."/>
            <person name="Spiering M.J."/>
            <person name="Tivey A."/>
            <person name="Gow N.A.R."/>
            <person name="Barrell B."/>
            <person name="Sullivan D.J."/>
            <person name="Berriman M."/>
        </authorList>
    </citation>
    <scope>NUCLEOTIDE SEQUENCE [LARGE SCALE GENOMIC DNA]</scope>
    <source>
        <strain>CD36 / ATCC MYA-646 / CBS 7987 / NCPF 3949 / NRRL Y-17841</strain>
    </source>
</reference>
<name>PACC_CANDC</name>
<feature type="chain" id="PRO_0000046825" description="pH-response transcription factor pacC/RIM101">
    <location>
        <begin position="1"/>
        <end position="666"/>
    </location>
</feature>
<feature type="zinc finger region" description="C2H2-type 1" evidence="3">
    <location>
        <begin position="215"/>
        <end position="240"/>
    </location>
</feature>
<feature type="zinc finger region" description="C2H2-type 2" evidence="3">
    <location>
        <begin position="251"/>
        <end position="275"/>
    </location>
</feature>
<feature type="zinc finger region" description="C2H2-type 3" evidence="3">
    <location>
        <begin position="281"/>
        <end position="303"/>
    </location>
</feature>
<feature type="region of interest" description="Disordered" evidence="4">
    <location>
        <begin position="1"/>
        <end position="77"/>
    </location>
</feature>
<feature type="region of interest" description="Disordered" evidence="4">
    <location>
        <begin position="96"/>
        <end position="122"/>
    </location>
</feature>
<feature type="region of interest" description="Disordered" evidence="4">
    <location>
        <begin position="294"/>
        <end position="347"/>
    </location>
</feature>
<feature type="region of interest" description="Disordered" evidence="4">
    <location>
        <begin position="474"/>
        <end position="527"/>
    </location>
</feature>
<feature type="region of interest" description="Disordered" evidence="4">
    <location>
        <begin position="560"/>
        <end position="593"/>
    </location>
</feature>
<feature type="coiled-coil region" evidence="2">
    <location>
        <begin position="591"/>
        <end position="660"/>
    </location>
</feature>
<feature type="short sequence motif" description="YPX[LI] motif 1">
    <location>
        <begin position="500"/>
        <end position="503"/>
    </location>
</feature>
<feature type="short sequence motif" description="YPX[LI] motif 2">
    <location>
        <begin position="534"/>
        <end position="537"/>
    </location>
</feature>
<feature type="short sequence motif" description="YPX[LI] motif 3">
    <location>
        <begin position="660"/>
        <end position="663"/>
    </location>
</feature>
<feature type="compositionally biased region" description="Polar residues" evidence="4">
    <location>
        <begin position="12"/>
        <end position="24"/>
    </location>
</feature>
<feature type="compositionally biased region" description="Low complexity" evidence="4">
    <location>
        <begin position="45"/>
        <end position="56"/>
    </location>
</feature>
<feature type="compositionally biased region" description="Polar residues" evidence="4">
    <location>
        <begin position="61"/>
        <end position="77"/>
    </location>
</feature>
<feature type="compositionally biased region" description="Polar residues" evidence="4">
    <location>
        <begin position="102"/>
        <end position="122"/>
    </location>
</feature>
<feature type="compositionally biased region" description="Basic and acidic residues" evidence="4">
    <location>
        <begin position="294"/>
        <end position="328"/>
    </location>
</feature>
<feature type="compositionally biased region" description="Polar residues" evidence="4">
    <location>
        <begin position="337"/>
        <end position="347"/>
    </location>
</feature>
<feature type="compositionally biased region" description="Polar residues" evidence="4">
    <location>
        <begin position="486"/>
        <end position="509"/>
    </location>
</feature>
<feature type="compositionally biased region" description="Acidic residues" evidence="4">
    <location>
        <begin position="571"/>
        <end position="593"/>
    </location>
</feature>
<feature type="sequence conflict" description="In Ref. 1; AAO61620." evidence="5" ref="1">
    <original>D</original>
    <variation>N</variation>
    <location>
        <position position="295"/>
    </location>
</feature>
<feature type="sequence conflict" description="In Ref. 1; AAO61620." evidence="5" ref="1">
    <original>Y</original>
    <variation>C</variation>
    <location>
        <position position="452"/>
    </location>
</feature>
<keyword id="KW-0010">Activator</keyword>
<keyword id="KW-0175">Coiled coil</keyword>
<keyword id="KW-0963">Cytoplasm</keyword>
<keyword id="KW-0238">DNA-binding</keyword>
<keyword id="KW-0479">Metal-binding</keyword>
<keyword id="KW-0539">Nucleus</keyword>
<keyword id="KW-0677">Repeat</keyword>
<keyword id="KW-0678">Repressor</keyword>
<keyword id="KW-0804">Transcription</keyword>
<keyword id="KW-0805">Transcription regulation</keyword>
<keyword id="KW-0862">Zinc</keyword>
<keyword id="KW-0863">Zinc-finger</keyword>